<keyword id="KW-0489">Methyltransferase</keyword>
<keyword id="KW-1185">Reference proteome</keyword>
<keyword id="KW-0949">S-adenosyl-L-methionine</keyword>
<keyword id="KW-0808">Transferase</keyword>
<keyword id="KW-0819">tRNA processing</keyword>
<dbReference type="EC" id="2.1.1.33" evidence="2"/>
<dbReference type="EMBL" id="CP000029">
    <property type="protein sequence ID" value="AAW54627.1"/>
    <property type="molecule type" value="Genomic_DNA"/>
</dbReference>
<dbReference type="RefSeq" id="WP_002493957.1">
    <property type="nucleotide sequence ID" value="NC_002976.3"/>
</dbReference>
<dbReference type="SMR" id="Q5HNG2"/>
<dbReference type="STRING" id="176279.SERP1307"/>
<dbReference type="GeneID" id="50018469"/>
<dbReference type="KEGG" id="ser:SERP1307"/>
<dbReference type="eggNOG" id="COG0220">
    <property type="taxonomic scope" value="Bacteria"/>
</dbReference>
<dbReference type="HOGENOM" id="CLU_050910_2_1_9"/>
<dbReference type="UniPathway" id="UPA00989"/>
<dbReference type="Proteomes" id="UP000000531">
    <property type="component" value="Chromosome"/>
</dbReference>
<dbReference type="GO" id="GO:0043527">
    <property type="term" value="C:tRNA methyltransferase complex"/>
    <property type="evidence" value="ECO:0007669"/>
    <property type="project" value="TreeGrafter"/>
</dbReference>
<dbReference type="GO" id="GO:0008176">
    <property type="term" value="F:tRNA (guanine(46)-N7)-methyltransferase activity"/>
    <property type="evidence" value="ECO:0007669"/>
    <property type="project" value="UniProtKB-UniRule"/>
</dbReference>
<dbReference type="FunFam" id="3.40.50.150:FF:000035">
    <property type="entry name" value="tRNA (guanine-N(7)-)-methyltransferase"/>
    <property type="match status" value="1"/>
</dbReference>
<dbReference type="Gene3D" id="3.40.50.150">
    <property type="entry name" value="Vaccinia Virus protein VP39"/>
    <property type="match status" value="1"/>
</dbReference>
<dbReference type="HAMAP" id="MF_01057">
    <property type="entry name" value="tRNA_methyltr_TrmB"/>
    <property type="match status" value="1"/>
</dbReference>
<dbReference type="InterPro" id="IPR029063">
    <property type="entry name" value="SAM-dependent_MTases_sf"/>
</dbReference>
<dbReference type="InterPro" id="IPR003358">
    <property type="entry name" value="tRNA_(Gua-N-7)_MeTrfase_Trmb"/>
</dbReference>
<dbReference type="InterPro" id="IPR055361">
    <property type="entry name" value="tRNA_methyltr_TrmB_bact"/>
</dbReference>
<dbReference type="NCBIfam" id="NF001080">
    <property type="entry name" value="PRK00121.2-2"/>
    <property type="match status" value="1"/>
</dbReference>
<dbReference type="NCBIfam" id="TIGR00091">
    <property type="entry name" value="tRNA (guanosine(46)-N7)-methyltransferase TrmB"/>
    <property type="match status" value="1"/>
</dbReference>
<dbReference type="PANTHER" id="PTHR23417">
    <property type="entry name" value="3-DEOXY-D-MANNO-OCTULOSONIC-ACID TRANSFERASE/TRNA GUANINE-N 7 - -METHYLTRANSFERASE"/>
    <property type="match status" value="1"/>
</dbReference>
<dbReference type="PANTHER" id="PTHR23417:SF14">
    <property type="entry name" value="PENTACOTRIPEPTIDE-REPEAT REGION OF PRORP DOMAIN-CONTAINING PROTEIN"/>
    <property type="match status" value="1"/>
</dbReference>
<dbReference type="Pfam" id="PF02390">
    <property type="entry name" value="Methyltransf_4"/>
    <property type="match status" value="1"/>
</dbReference>
<dbReference type="SUPFAM" id="SSF53335">
    <property type="entry name" value="S-adenosyl-L-methionine-dependent methyltransferases"/>
    <property type="match status" value="1"/>
</dbReference>
<dbReference type="PROSITE" id="PS51625">
    <property type="entry name" value="SAM_MT_TRMB"/>
    <property type="match status" value="1"/>
</dbReference>
<gene>
    <name evidence="2" type="primary">trmB</name>
    <name type="ordered locus">SERP1307</name>
</gene>
<name>TRMB_STAEQ</name>
<feature type="chain" id="PRO_0000171395" description="tRNA (guanine-N(7)-)-methyltransferase">
    <location>
        <begin position="1"/>
        <end position="215"/>
    </location>
</feature>
<feature type="active site" evidence="1">
    <location>
        <position position="117"/>
    </location>
</feature>
<feature type="binding site" evidence="2">
    <location>
        <position position="43"/>
    </location>
    <ligand>
        <name>S-adenosyl-L-methionine</name>
        <dbReference type="ChEBI" id="CHEBI:59789"/>
    </ligand>
</feature>
<feature type="binding site" evidence="2">
    <location>
        <position position="68"/>
    </location>
    <ligand>
        <name>S-adenosyl-L-methionine</name>
        <dbReference type="ChEBI" id="CHEBI:59789"/>
    </ligand>
</feature>
<feature type="binding site" evidence="2">
    <location>
        <position position="95"/>
    </location>
    <ligand>
        <name>S-adenosyl-L-methionine</name>
        <dbReference type="ChEBI" id="CHEBI:59789"/>
    </ligand>
</feature>
<feature type="binding site" evidence="2">
    <location>
        <position position="117"/>
    </location>
    <ligand>
        <name>S-adenosyl-L-methionine</name>
        <dbReference type="ChEBI" id="CHEBI:59789"/>
    </ligand>
</feature>
<feature type="binding site" evidence="2">
    <location>
        <position position="121"/>
    </location>
    <ligand>
        <name>substrate</name>
    </ligand>
</feature>
<feature type="binding site" evidence="2">
    <location>
        <position position="153"/>
    </location>
    <ligand>
        <name>substrate</name>
    </ligand>
</feature>
<feature type="binding site" evidence="2">
    <location>
        <begin position="190"/>
        <end position="193"/>
    </location>
    <ligand>
        <name>substrate</name>
    </ligand>
</feature>
<protein>
    <recommendedName>
        <fullName evidence="2">tRNA (guanine-N(7)-)-methyltransferase</fullName>
        <ecNumber evidence="2">2.1.1.33</ecNumber>
    </recommendedName>
    <alternativeName>
        <fullName evidence="2">tRNA (guanine(46)-N(7))-methyltransferase</fullName>
    </alternativeName>
    <alternativeName>
        <fullName evidence="2">tRNA(m7G46)-methyltransferase</fullName>
    </alternativeName>
</protein>
<sequence length="215" mass="25716">MRVRYKPWAEDYLKNHPDLVDMDGAHAGKMSEWFEKEQPIYIEIGSGMGQFITTLAAQYPEINFVSMEREKSVMYKVLDKTKEMGLKNLKMICNDAIELNEYFKDKEISRIYLNFSDPWPKKRHAKRRLTYHTYLALYKQILKDDGEIHFKTDNRGLFAFSIESMSQFGMYFTKMNLNLHDEDDEDNIVTEYEKKFSEKGSRIYRMEAKFHKCFE</sequence>
<organism>
    <name type="scientific">Staphylococcus epidermidis (strain ATCC 35984 / DSM 28319 / BCRC 17069 / CCUG 31568 / BM 3577 / RP62A)</name>
    <dbReference type="NCBI Taxonomy" id="176279"/>
    <lineage>
        <taxon>Bacteria</taxon>
        <taxon>Bacillati</taxon>
        <taxon>Bacillota</taxon>
        <taxon>Bacilli</taxon>
        <taxon>Bacillales</taxon>
        <taxon>Staphylococcaceae</taxon>
        <taxon>Staphylococcus</taxon>
    </lineage>
</organism>
<comment type="function">
    <text evidence="2">Catalyzes the formation of N(7)-methylguanine at position 46 (m7G46) in tRNA.</text>
</comment>
<comment type="catalytic activity">
    <reaction evidence="2">
        <text>guanosine(46) in tRNA + S-adenosyl-L-methionine = N(7)-methylguanosine(46) in tRNA + S-adenosyl-L-homocysteine</text>
        <dbReference type="Rhea" id="RHEA:42708"/>
        <dbReference type="Rhea" id="RHEA-COMP:10188"/>
        <dbReference type="Rhea" id="RHEA-COMP:10189"/>
        <dbReference type="ChEBI" id="CHEBI:57856"/>
        <dbReference type="ChEBI" id="CHEBI:59789"/>
        <dbReference type="ChEBI" id="CHEBI:74269"/>
        <dbReference type="ChEBI" id="CHEBI:74480"/>
        <dbReference type="EC" id="2.1.1.33"/>
    </reaction>
</comment>
<comment type="pathway">
    <text evidence="2">tRNA modification; N(7)-methylguanine-tRNA biosynthesis.</text>
</comment>
<comment type="similarity">
    <text evidence="2">Belongs to the class I-like SAM-binding methyltransferase superfamily. TrmB family.</text>
</comment>
<proteinExistence type="inferred from homology"/>
<reference key="1">
    <citation type="journal article" date="2005" name="J. Bacteriol.">
        <title>Insights on evolution of virulence and resistance from the complete genome analysis of an early methicillin-resistant Staphylococcus aureus strain and a biofilm-producing methicillin-resistant Staphylococcus epidermidis strain.</title>
        <authorList>
            <person name="Gill S.R."/>
            <person name="Fouts D.E."/>
            <person name="Archer G.L."/>
            <person name="Mongodin E.F."/>
            <person name="DeBoy R.T."/>
            <person name="Ravel J."/>
            <person name="Paulsen I.T."/>
            <person name="Kolonay J.F."/>
            <person name="Brinkac L.M."/>
            <person name="Beanan M.J."/>
            <person name="Dodson R.J."/>
            <person name="Daugherty S.C."/>
            <person name="Madupu R."/>
            <person name="Angiuoli S.V."/>
            <person name="Durkin A.S."/>
            <person name="Haft D.H."/>
            <person name="Vamathevan J.J."/>
            <person name="Khouri H."/>
            <person name="Utterback T.R."/>
            <person name="Lee C."/>
            <person name="Dimitrov G."/>
            <person name="Jiang L."/>
            <person name="Qin H."/>
            <person name="Weidman J."/>
            <person name="Tran K."/>
            <person name="Kang K.H."/>
            <person name="Hance I.R."/>
            <person name="Nelson K.E."/>
            <person name="Fraser C.M."/>
        </authorList>
    </citation>
    <scope>NUCLEOTIDE SEQUENCE [LARGE SCALE GENOMIC DNA]</scope>
    <source>
        <strain>ATCC 35984 / DSM 28319 / BCRC 17069 / CCUG 31568 / BM 3577 / RP62A</strain>
    </source>
</reference>
<evidence type="ECO:0000250" key="1"/>
<evidence type="ECO:0000255" key="2">
    <source>
        <dbReference type="HAMAP-Rule" id="MF_01057"/>
    </source>
</evidence>
<accession>Q5HNG2</accession>